<comment type="catalytic activity">
    <reaction evidence="1">
        <text>L-aspartate + NH4(+) + ATP = L-asparagine + AMP + diphosphate + H(+)</text>
        <dbReference type="Rhea" id="RHEA:11372"/>
        <dbReference type="ChEBI" id="CHEBI:15378"/>
        <dbReference type="ChEBI" id="CHEBI:28938"/>
        <dbReference type="ChEBI" id="CHEBI:29991"/>
        <dbReference type="ChEBI" id="CHEBI:30616"/>
        <dbReference type="ChEBI" id="CHEBI:33019"/>
        <dbReference type="ChEBI" id="CHEBI:58048"/>
        <dbReference type="ChEBI" id="CHEBI:456215"/>
        <dbReference type="EC" id="6.3.1.1"/>
    </reaction>
</comment>
<comment type="pathway">
    <text evidence="1">Amino-acid biosynthesis; L-asparagine biosynthesis; L-asparagine from L-aspartate (ammonia route): step 1/1.</text>
</comment>
<comment type="subcellular location">
    <subcellularLocation>
        <location evidence="1">Cytoplasm</location>
    </subcellularLocation>
</comment>
<comment type="similarity">
    <text evidence="1">Belongs to the class-II aminoacyl-tRNA synthetase family. AsnA subfamily.</text>
</comment>
<organism>
    <name type="scientific">Shigella boydii serotype 18 (strain CDC 3083-94 / BS512)</name>
    <dbReference type="NCBI Taxonomy" id="344609"/>
    <lineage>
        <taxon>Bacteria</taxon>
        <taxon>Pseudomonadati</taxon>
        <taxon>Pseudomonadota</taxon>
        <taxon>Gammaproteobacteria</taxon>
        <taxon>Enterobacterales</taxon>
        <taxon>Enterobacteriaceae</taxon>
        <taxon>Shigella</taxon>
    </lineage>
</organism>
<sequence length="330" mass="36597">MKTAYIAKQRQISFVKSHFSRQLEECLGLIEVQAPILSRVGDGTQDNLSGCEKAVQVKVKALPDAQFEVVHSLAKWKRQTLGQHDFSAGEGLYTHMKALRPDEDRLSPLHSVYVDQWDWERVMGDGERQFSTLKSTVEAIWAGIKATEAAVSEEFGLAPFLPDQIHFVHSQELLSRYPDLDAKGRERAIAKDLGAVFLVGIGGKLSDGHRHDVRAPDYDDWSTPSELGHAGLNGDILVWNPVLEDAFELSSMGIRVDADTLKHQLALTGDEDRLQLEWHQALLRGEMPQTIGGGIGQSRLTMLLLQLPHIGQVQCGVWPAAVRESVPSLL</sequence>
<accession>B2TUN1</accession>
<protein>
    <recommendedName>
        <fullName evidence="1">Aspartate--ammonia ligase</fullName>
        <ecNumber evidence="1">6.3.1.1</ecNumber>
    </recommendedName>
    <alternativeName>
        <fullName evidence="1">Asparagine synthetase A</fullName>
    </alternativeName>
</protein>
<proteinExistence type="inferred from homology"/>
<dbReference type="EC" id="6.3.1.1" evidence="1"/>
<dbReference type="EMBL" id="CP001063">
    <property type="protein sequence ID" value="ACD07035.1"/>
    <property type="molecule type" value="Genomic_DNA"/>
</dbReference>
<dbReference type="RefSeq" id="WP_000845087.1">
    <property type="nucleotide sequence ID" value="NC_010658.1"/>
</dbReference>
<dbReference type="SMR" id="B2TUN1"/>
<dbReference type="STRING" id="344609.SbBS512_E4177"/>
<dbReference type="KEGG" id="sbc:SbBS512_E4177"/>
<dbReference type="HOGENOM" id="CLU_071543_0_0_6"/>
<dbReference type="UniPathway" id="UPA00134">
    <property type="reaction ID" value="UER00194"/>
</dbReference>
<dbReference type="Proteomes" id="UP000001030">
    <property type="component" value="Chromosome"/>
</dbReference>
<dbReference type="GO" id="GO:0005829">
    <property type="term" value="C:cytosol"/>
    <property type="evidence" value="ECO:0007669"/>
    <property type="project" value="TreeGrafter"/>
</dbReference>
<dbReference type="GO" id="GO:0004071">
    <property type="term" value="F:aspartate-ammonia ligase activity"/>
    <property type="evidence" value="ECO:0007669"/>
    <property type="project" value="UniProtKB-UniRule"/>
</dbReference>
<dbReference type="GO" id="GO:0005524">
    <property type="term" value="F:ATP binding"/>
    <property type="evidence" value="ECO:0007669"/>
    <property type="project" value="UniProtKB-UniRule"/>
</dbReference>
<dbReference type="GO" id="GO:0070981">
    <property type="term" value="P:L-asparagine biosynthetic process"/>
    <property type="evidence" value="ECO:0007669"/>
    <property type="project" value="UniProtKB-UniRule"/>
</dbReference>
<dbReference type="CDD" id="cd00645">
    <property type="entry name" value="AsnA"/>
    <property type="match status" value="1"/>
</dbReference>
<dbReference type="FunFam" id="3.30.930.10:FF:000025">
    <property type="entry name" value="Aspartate--ammonia ligase"/>
    <property type="match status" value="1"/>
</dbReference>
<dbReference type="Gene3D" id="3.30.930.10">
    <property type="entry name" value="Bira Bifunctional Protein, Domain 2"/>
    <property type="match status" value="1"/>
</dbReference>
<dbReference type="HAMAP" id="MF_00555">
    <property type="entry name" value="AsnA"/>
    <property type="match status" value="1"/>
</dbReference>
<dbReference type="InterPro" id="IPR006195">
    <property type="entry name" value="aa-tRNA-synth_II"/>
</dbReference>
<dbReference type="InterPro" id="IPR045864">
    <property type="entry name" value="aa-tRNA-synth_II/BPL/LPL"/>
</dbReference>
<dbReference type="InterPro" id="IPR004618">
    <property type="entry name" value="AsnA"/>
</dbReference>
<dbReference type="NCBIfam" id="TIGR00669">
    <property type="entry name" value="asnA"/>
    <property type="match status" value="1"/>
</dbReference>
<dbReference type="PANTHER" id="PTHR30073">
    <property type="entry name" value="ASPARTATE--AMMONIA LIGASE"/>
    <property type="match status" value="1"/>
</dbReference>
<dbReference type="PANTHER" id="PTHR30073:SF5">
    <property type="entry name" value="ASPARTATE--AMMONIA LIGASE"/>
    <property type="match status" value="1"/>
</dbReference>
<dbReference type="Pfam" id="PF03590">
    <property type="entry name" value="AsnA"/>
    <property type="match status" value="1"/>
</dbReference>
<dbReference type="PIRSF" id="PIRSF001555">
    <property type="entry name" value="Asp_ammon_ligase"/>
    <property type="match status" value="1"/>
</dbReference>
<dbReference type="SUPFAM" id="SSF55681">
    <property type="entry name" value="Class II aaRS and biotin synthetases"/>
    <property type="match status" value="1"/>
</dbReference>
<dbReference type="PROSITE" id="PS50862">
    <property type="entry name" value="AA_TRNA_LIGASE_II"/>
    <property type="match status" value="1"/>
</dbReference>
<gene>
    <name evidence="1" type="primary">asnA</name>
    <name type="ordered locus">SbBS512_E4177</name>
</gene>
<keyword id="KW-0028">Amino-acid biosynthesis</keyword>
<keyword id="KW-0061">Asparagine biosynthesis</keyword>
<keyword id="KW-0067">ATP-binding</keyword>
<keyword id="KW-0963">Cytoplasm</keyword>
<keyword id="KW-0436">Ligase</keyword>
<keyword id="KW-0547">Nucleotide-binding</keyword>
<keyword id="KW-1185">Reference proteome</keyword>
<evidence type="ECO:0000255" key="1">
    <source>
        <dbReference type="HAMAP-Rule" id="MF_00555"/>
    </source>
</evidence>
<reference key="1">
    <citation type="submission" date="2008-05" db="EMBL/GenBank/DDBJ databases">
        <title>Complete sequence of Shigella boydii serotype 18 strain BS512.</title>
        <authorList>
            <person name="Rasko D.A."/>
            <person name="Rosovitz M."/>
            <person name="Maurelli A.T."/>
            <person name="Myers G."/>
            <person name="Seshadri R."/>
            <person name="Cer R."/>
            <person name="Jiang L."/>
            <person name="Ravel J."/>
            <person name="Sebastian Y."/>
        </authorList>
    </citation>
    <scope>NUCLEOTIDE SEQUENCE [LARGE SCALE GENOMIC DNA]</scope>
    <source>
        <strain>CDC 3083-94 / BS512</strain>
    </source>
</reference>
<name>ASNA_SHIB3</name>
<feature type="chain" id="PRO_1000129130" description="Aspartate--ammonia ligase">
    <location>
        <begin position="1"/>
        <end position="330"/>
    </location>
</feature>